<gene>
    <name evidence="1" type="primary">nadD</name>
    <name type="ordered locus">Sbal223_1095</name>
</gene>
<keyword id="KW-0067">ATP-binding</keyword>
<keyword id="KW-0520">NAD</keyword>
<keyword id="KW-0547">Nucleotide-binding</keyword>
<keyword id="KW-0548">Nucleotidyltransferase</keyword>
<keyword id="KW-0662">Pyridine nucleotide biosynthesis</keyword>
<keyword id="KW-0808">Transferase</keyword>
<proteinExistence type="inferred from homology"/>
<organism>
    <name type="scientific">Shewanella baltica (strain OS223)</name>
    <dbReference type="NCBI Taxonomy" id="407976"/>
    <lineage>
        <taxon>Bacteria</taxon>
        <taxon>Pseudomonadati</taxon>
        <taxon>Pseudomonadota</taxon>
        <taxon>Gammaproteobacteria</taxon>
        <taxon>Alteromonadales</taxon>
        <taxon>Shewanellaceae</taxon>
        <taxon>Shewanella</taxon>
    </lineage>
</organism>
<name>NADD_SHEB2</name>
<evidence type="ECO:0000255" key="1">
    <source>
        <dbReference type="HAMAP-Rule" id="MF_00244"/>
    </source>
</evidence>
<reference key="1">
    <citation type="submission" date="2008-12" db="EMBL/GenBank/DDBJ databases">
        <title>Complete sequence of chromosome of Shewanella baltica OS223.</title>
        <authorList>
            <consortium name="US DOE Joint Genome Institute"/>
            <person name="Lucas S."/>
            <person name="Copeland A."/>
            <person name="Lapidus A."/>
            <person name="Glavina del Rio T."/>
            <person name="Dalin E."/>
            <person name="Tice H."/>
            <person name="Bruce D."/>
            <person name="Goodwin L."/>
            <person name="Pitluck S."/>
            <person name="Chertkov O."/>
            <person name="Meincke L."/>
            <person name="Brettin T."/>
            <person name="Detter J.C."/>
            <person name="Han C."/>
            <person name="Kuske C.R."/>
            <person name="Larimer F."/>
            <person name="Land M."/>
            <person name="Hauser L."/>
            <person name="Kyrpides N."/>
            <person name="Ovchinnikova G."/>
            <person name="Brettar I."/>
            <person name="Rodrigues J."/>
            <person name="Konstantinidis K."/>
            <person name="Tiedje J."/>
        </authorList>
    </citation>
    <scope>NUCLEOTIDE SEQUENCE [LARGE SCALE GENOMIC DNA]</scope>
    <source>
        <strain>OS223</strain>
    </source>
</reference>
<sequence>MRIGILGGTFDPIHYGHIRPAIEVKHALALDKILLMPNHIPPHKQQPNLTTAQRLNMVADVCSQLDGFELCDIEAKRDTPSYTVVTLEQLKALHPEDELFFIMGMDSFLQLKSWYEWQRLFNFAHLVVCQRPGWQLDAAHPMQQILTARSHAHQETHEGHAKNTHKNSGQIFPVTITPQDISSTQIREQLAKGEIPADLLMPITLDYIQNQRLYLP</sequence>
<dbReference type="EC" id="2.7.7.18" evidence="1"/>
<dbReference type="EMBL" id="CP001252">
    <property type="protein sequence ID" value="ACK45610.1"/>
    <property type="molecule type" value="Genomic_DNA"/>
</dbReference>
<dbReference type="RefSeq" id="WP_012587017.1">
    <property type="nucleotide sequence ID" value="NC_011663.1"/>
</dbReference>
<dbReference type="SMR" id="B8E4X4"/>
<dbReference type="KEGG" id="sbp:Sbal223_1095"/>
<dbReference type="HOGENOM" id="CLU_069765_0_0_6"/>
<dbReference type="UniPathway" id="UPA00253">
    <property type="reaction ID" value="UER00332"/>
</dbReference>
<dbReference type="Proteomes" id="UP000002507">
    <property type="component" value="Chromosome"/>
</dbReference>
<dbReference type="GO" id="GO:0005524">
    <property type="term" value="F:ATP binding"/>
    <property type="evidence" value="ECO:0007669"/>
    <property type="project" value="UniProtKB-KW"/>
</dbReference>
<dbReference type="GO" id="GO:0004515">
    <property type="term" value="F:nicotinate-nucleotide adenylyltransferase activity"/>
    <property type="evidence" value="ECO:0007669"/>
    <property type="project" value="UniProtKB-UniRule"/>
</dbReference>
<dbReference type="GO" id="GO:0009435">
    <property type="term" value="P:NAD biosynthetic process"/>
    <property type="evidence" value="ECO:0007669"/>
    <property type="project" value="UniProtKB-UniRule"/>
</dbReference>
<dbReference type="CDD" id="cd02165">
    <property type="entry name" value="NMNAT"/>
    <property type="match status" value="1"/>
</dbReference>
<dbReference type="FunFam" id="3.40.50.620:FF:000039">
    <property type="entry name" value="Probable nicotinate-nucleotide adenylyltransferase"/>
    <property type="match status" value="1"/>
</dbReference>
<dbReference type="Gene3D" id="3.40.50.620">
    <property type="entry name" value="HUPs"/>
    <property type="match status" value="1"/>
</dbReference>
<dbReference type="HAMAP" id="MF_00244">
    <property type="entry name" value="NaMN_adenylyltr"/>
    <property type="match status" value="1"/>
</dbReference>
<dbReference type="InterPro" id="IPR004821">
    <property type="entry name" value="Cyt_trans-like"/>
</dbReference>
<dbReference type="InterPro" id="IPR005248">
    <property type="entry name" value="NadD/NMNAT"/>
</dbReference>
<dbReference type="InterPro" id="IPR014729">
    <property type="entry name" value="Rossmann-like_a/b/a_fold"/>
</dbReference>
<dbReference type="NCBIfam" id="TIGR00125">
    <property type="entry name" value="cyt_tran_rel"/>
    <property type="match status" value="1"/>
</dbReference>
<dbReference type="NCBIfam" id="TIGR00482">
    <property type="entry name" value="nicotinate (nicotinamide) nucleotide adenylyltransferase"/>
    <property type="match status" value="1"/>
</dbReference>
<dbReference type="NCBIfam" id="NF000839">
    <property type="entry name" value="PRK00071.1-1"/>
    <property type="match status" value="1"/>
</dbReference>
<dbReference type="NCBIfam" id="NF000840">
    <property type="entry name" value="PRK00071.1-3"/>
    <property type="match status" value="1"/>
</dbReference>
<dbReference type="PANTHER" id="PTHR39321">
    <property type="entry name" value="NICOTINATE-NUCLEOTIDE ADENYLYLTRANSFERASE-RELATED"/>
    <property type="match status" value="1"/>
</dbReference>
<dbReference type="PANTHER" id="PTHR39321:SF3">
    <property type="entry name" value="PHOSPHOPANTETHEINE ADENYLYLTRANSFERASE"/>
    <property type="match status" value="1"/>
</dbReference>
<dbReference type="Pfam" id="PF01467">
    <property type="entry name" value="CTP_transf_like"/>
    <property type="match status" value="1"/>
</dbReference>
<dbReference type="SUPFAM" id="SSF52374">
    <property type="entry name" value="Nucleotidylyl transferase"/>
    <property type="match status" value="1"/>
</dbReference>
<feature type="chain" id="PRO_1000125360" description="Probable nicotinate-nucleotide adenylyltransferase">
    <location>
        <begin position="1"/>
        <end position="216"/>
    </location>
</feature>
<protein>
    <recommendedName>
        <fullName evidence="1">Probable nicotinate-nucleotide adenylyltransferase</fullName>
        <ecNumber evidence="1">2.7.7.18</ecNumber>
    </recommendedName>
    <alternativeName>
        <fullName evidence="1">Deamido-NAD(+) diphosphorylase</fullName>
    </alternativeName>
    <alternativeName>
        <fullName evidence="1">Deamido-NAD(+) pyrophosphorylase</fullName>
    </alternativeName>
    <alternativeName>
        <fullName evidence="1">Nicotinate mononucleotide adenylyltransferase</fullName>
        <shortName evidence="1">NaMN adenylyltransferase</shortName>
    </alternativeName>
</protein>
<accession>B8E4X4</accession>
<comment type="function">
    <text evidence="1">Catalyzes the reversible adenylation of nicotinate mononucleotide (NaMN) to nicotinic acid adenine dinucleotide (NaAD).</text>
</comment>
<comment type="catalytic activity">
    <reaction evidence="1">
        <text>nicotinate beta-D-ribonucleotide + ATP + H(+) = deamido-NAD(+) + diphosphate</text>
        <dbReference type="Rhea" id="RHEA:22860"/>
        <dbReference type="ChEBI" id="CHEBI:15378"/>
        <dbReference type="ChEBI" id="CHEBI:30616"/>
        <dbReference type="ChEBI" id="CHEBI:33019"/>
        <dbReference type="ChEBI" id="CHEBI:57502"/>
        <dbReference type="ChEBI" id="CHEBI:58437"/>
        <dbReference type="EC" id="2.7.7.18"/>
    </reaction>
</comment>
<comment type="pathway">
    <text evidence="1">Cofactor biosynthesis; NAD(+) biosynthesis; deamido-NAD(+) from nicotinate D-ribonucleotide: step 1/1.</text>
</comment>
<comment type="similarity">
    <text evidence="1">Belongs to the NadD family.</text>
</comment>